<gene>
    <name evidence="1" type="primary">panB</name>
    <name type="ordered locus">Bsph_1987</name>
</gene>
<keyword id="KW-0963">Cytoplasm</keyword>
<keyword id="KW-0460">Magnesium</keyword>
<keyword id="KW-0479">Metal-binding</keyword>
<keyword id="KW-0566">Pantothenate biosynthesis</keyword>
<keyword id="KW-0808">Transferase</keyword>
<name>PANB_LYSSC</name>
<feature type="chain" id="PRO_1000096981" description="3-methyl-2-oxobutanoate hydroxymethyltransferase">
    <location>
        <begin position="1"/>
        <end position="279"/>
    </location>
</feature>
<feature type="active site" description="Proton acceptor" evidence="1">
    <location>
        <position position="181"/>
    </location>
</feature>
<feature type="binding site" evidence="1">
    <location>
        <begin position="43"/>
        <end position="44"/>
    </location>
    <ligand>
        <name>3-methyl-2-oxobutanoate</name>
        <dbReference type="ChEBI" id="CHEBI:11851"/>
    </ligand>
</feature>
<feature type="binding site" evidence="1">
    <location>
        <position position="43"/>
    </location>
    <ligand>
        <name>Mg(2+)</name>
        <dbReference type="ChEBI" id="CHEBI:18420"/>
    </ligand>
</feature>
<feature type="binding site" evidence="1">
    <location>
        <position position="82"/>
    </location>
    <ligand>
        <name>3-methyl-2-oxobutanoate</name>
        <dbReference type="ChEBI" id="CHEBI:11851"/>
    </ligand>
</feature>
<feature type="binding site" evidence="1">
    <location>
        <position position="82"/>
    </location>
    <ligand>
        <name>Mg(2+)</name>
        <dbReference type="ChEBI" id="CHEBI:18420"/>
    </ligand>
</feature>
<feature type="binding site" evidence="1">
    <location>
        <position position="112"/>
    </location>
    <ligand>
        <name>3-methyl-2-oxobutanoate</name>
        <dbReference type="ChEBI" id="CHEBI:11851"/>
    </ligand>
</feature>
<feature type="binding site" evidence="1">
    <location>
        <position position="114"/>
    </location>
    <ligand>
        <name>Mg(2+)</name>
        <dbReference type="ChEBI" id="CHEBI:18420"/>
    </ligand>
</feature>
<evidence type="ECO:0000255" key="1">
    <source>
        <dbReference type="HAMAP-Rule" id="MF_00156"/>
    </source>
</evidence>
<reference key="1">
    <citation type="journal article" date="2008" name="J. Bacteriol.">
        <title>Complete genome sequence of the mosquitocidal bacterium Bacillus sphaericus C3-41 and comparison with those of closely related Bacillus species.</title>
        <authorList>
            <person name="Hu X."/>
            <person name="Fan W."/>
            <person name="Han B."/>
            <person name="Liu H."/>
            <person name="Zheng D."/>
            <person name="Li Q."/>
            <person name="Dong W."/>
            <person name="Yan J."/>
            <person name="Gao M."/>
            <person name="Berry C."/>
            <person name="Yuan Z."/>
        </authorList>
    </citation>
    <scope>NUCLEOTIDE SEQUENCE [LARGE SCALE GENOMIC DNA]</scope>
    <source>
        <strain>C3-41</strain>
    </source>
</reference>
<comment type="function">
    <text evidence="1">Catalyzes the reversible reaction in which hydroxymethyl group from 5,10-methylenetetrahydrofolate is transferred onto alpha-ketoisovalerate to form ketopantoate.</text>
</comment>
<comment type="catalytic activity">
    <reaction evidence="1">
        <text>3-methyl-2-oxobutanoate + (6R)-5,10-methylene-5,6,7,8-tetrahydrofolate + H2O = 2-dehydropantoate + (6S)-5,6,7,8-tetrahydrofolate</text>
        <dbReference type="Rhea" id="RHEA:11824"/>
        <dbReference type="ChEBI" id="CHEBI:11561"/>
        <dbReference type="ChEBI" id="CHEBI:11851"/>
        <dbReference type="ChEBI" id="CHEBI:15377"/>
        <dbReference type="ChEBI" id="CHEBI:15636"/>
        <dbReference type="ChEBI" id="CHEBI:57453"/>
        <dbReference type="EC" id="2.1.2.11"/>
    </reaction>
</comment>
<comment type="cofactor">
    <cofactor evidence="1">
        <name>Mg(2+)</name>
        <dbReference type="ChEBI" id="CHEBI:18420"/>
    </cofactor>
    <text evidence="1">Binds 1 Mg(2+) ion per subunit.</text>
</comment>
<comment type="pathway">
    <text evidence="1">Cofactor biosynthesis; (R)-pantothenate biosynthesis; (R)-pantoate from 3-methyl-2-oxobutanoate: step 1/2.</text>
</comment>
<comment type="subunit">
    <text evidence="1">Homodecamer; pentamer of dimers.</text>
</comment>
<comment type="subcellular location">
    <subcellularLocation>
        <location evidence="1">Cytoplasm</location>
    </subcellularLocation>
</comment>
<comment type="similarity">
    <text evidence="1">Belongs to the PanB family.</text>
</comment>
<organism>
    <name type="scientific">Lysinibacillus sphaericus (strain C3-41)</name>
    <dbReference type="NCBI Taxonomy" id="444177"/>
    <lineage>
        <taxon>Bacteria</taxon>
        <taxon>Bacillati</taxon>
        <taxon>Bacillota</taxon>
        <taxon>Bacilli</taxon>
        <taxon>Bacillales</taxon>
        <taxon>Bacillaceae</taxon>
        <taxon>Lysinibacillus</taxon>
    </lineage>
</organism>
<accession>B1HU19</accession>
<sequence length="279" mass="29765">MKTTTDFLKMKAAGEKIVMVTAYDYPAAKFAEAANVDMILVGDSLGMVVLGYDSTMPVTVADMIHHAKATRRGAKDTFVVVDMPFGSYHGDVNETLKTAIYMMQETGADALKVEGAGDIIPVIQKLTTAGIPVVAHLGLLPQSAGVLGGYKVQGKTAEQATKLIEDAKQCEEAGACAVVLECIPHQLTEIVSAHLIIPTIGIGAGVEADGQVLVYHDMLSYGSHHVPKFVQQFANMGKEASEGMVRYVEAVKAGTFPAQKHFFTMKEDALDQLYGGVQS</sequence>
<proteinExistence type="inferred from homology"/>
<protein>
    <recommendedName>
        <fullName evidence="1">3-methyl-2-oxobutanoate hydroxymethyltransferase</fullName>
        <ecNumber evidence="1">2.1.2.11</ecNumber>
    </recommendedName>
    <alternativeName>
        <fullName evidence="1">Ketopantoate hydroxymethyltransferase</fullName>
        <shortName evidence="1">KPHMT</shortName>
    </alternativeName>
</protein>
<dbReference type="EC" id="2.1.2.11" evidence="1"/>
<dbReference type="EMBL" id="CP000817">
    <property type="protein sequence ID" value="ACA39574.1"/>
    <property type="molecule type" value="Genomic_DNA"/>
</dbReference>
<dbReference type="RefSeq" id="WP_012293666.1">
    <property type="nucleotide sequence ID" value="NC_010382.1"/>
</dbReference>
<dbReference type="SMR" id="B1HU19"/>
<dbReference type="EnsemblBacteria" id="ACA39574">
    <property type="protein sequence ID" value="ACA39574"/>
    <property type="gene ID" value="Bsph_1987"/>
</dbReference>
<dbReference type="KEGG" id="lsp:Bsph_1987"/>
<dbReference type="HOGENOM" id="CLU_036645_1_0_9"/>
<dbReference type="UniPathway" id="UPA00028">
    <property type="reaction ID" value="UER00003"/>
</dbReference>
<dbReference type="Proteomes" id="UP000002164">
    <property type="component" value="Chromosome"/>
</dbReference>
<dbReference type="GO" id="GO:0005737">
    <property type="term" value="C:cytoplasm"/>
    <property type="evidence" value="ECO:0007669"/>
    <property type="project" value="UniProtKB-SubCell"/>
</dbReference>
<dbReference type="GO" id="GO:0003864">
    <property type="term" value="F:3-methyl-2-oxobutanoate hydroxymethyltransferase activity"/>
    <property type="evidence" value="ECO:0007669"/>
    <property type="project" value="UniProtKB-UniRule"/>
</dbReference>
<dbReference type="GO" id="GO:0000287">
    <property type="term" value="F:magnesium ion binding"/>
    <property type="evidence" value="ECO:0007669"/>
    <property type="project" value="TreeGrafter"/>
</dbReference>
<dbReference type="GO" id="GO:0015940">
    <property type="term" value="P:pantothenate biosynthetic process"/>
    <property type="evidence" value="ECO:0007669"/>
    <property type="project" value="UniProtKB-UniRule"/>
</dbReference>
<dbReference type="CDD" id="cd06557">
    <property type="entry name" value="KPHMT-like"/>
    <property type="match status" value="1"/>
</dbReference>
<dbReference type="FunFam" id="3.20.20.60:FF:000003">
    <property type="entry name" value="3-methyl-2-oxobutanoate hydroxymethyltransferase"/>
    <property type="match status" value="1"/>
</dbReference>
<dbReference type="Gene3D" id="3.20.20.60">
    <property type="entry name" value="Phosphoenolpyruvate-binding domains"/>
    <property type="match status" value="1"/>
</dbReference>
<dbReference type="HAMAP" id="MF_00156">
    <property type="entry name" value="PanB"/>
    <property type="match status" value="1"/>
</dbReference>
<dbReference type="InterPro" id="IPR003700">
    <property type="entry name" value="Pantoate_hydroxy_MeTrfase"/>
</dbReference>
<dbReference type="InterPro" id="IPR015813">
    <property type="entry name" value="Pyrv/PenolPyrv_kinase-like_dom"/>
</dbReference>
<dbReference type="InterPro" id="IPR040442">
    <property type="entry name" value="Pyrv_kinase-like_dom_sf"/>
</dbReference>
<dbReference type="NCBIfam" id="TIGR00222">
    <property type="entry name" value="panB"/>
    <property type="match status" value="1"/>
</dbReference>
<dbReference type="NCBIfam" id="NF001452">
    <property type="entry name" value="PRK00311.1"/>
    <property type="match status" value="1"/>
</dbReference>
<dbReference type="PANTHER" id="PTHR20881">
    <property type="entry name" value="3-METHYL-2-OXOBUTANOATE HYDROXYMETHYLTRANSFERASE"/>
    <property type="match status" value="1"/>
</dbReference>
<dbReference type="PANTHER" id="PTHR20881:SF0">
    <property type="entry name" value="3-METHYL-2-OXOBUTANOATE HYDROXYMETHYLTRANSFERASE"/>
    <property type="match status" value="1"/>
</dbReference>
<dbReference type="Pfam" id="PF02548">
    <property type="entry name" value="Pantoate_transf"/>
    <property type="match status" value="1"/>
</dbReference>
<dbReference type="PIRSF" id="PIRSF000388">
    <property type="entry name" value="Pantoate_hydroxy_MeTrfase"/>
    <property type="match status" value="1"/>
</dbReference>
<dbReference type="SUPFAM" id="SSF51621">
    <property type="entry name" value="Phosphoenolpyruvate/pyruvate domain"/>
    <property type="match status" value="1"/>
</dbReference>